<sequence>MQLGLDFNLVEDLVAGVDEVGRGPLCGPVVTAAVILDPSRPILGLNDSKKLSEARREALFEEIREKALAWCIARAEVEEIDRLNILHATMLAMQRAVEGLSVIPRLALIDGNRCPKLAVPCAPVVKGDSQVPAIAAASILAKVSRDREMVELDRVYPGYGMAGHKGYPTAVHLEALSRLGPTPIHRRSFAPVRELLDVSVQ</sequence>
<reference key="1">
    <citation type="journal article" date="2000" name="Nature">
        <title>Complete genome sequence of Pseudomonas aeruginosa PAO1, an opportunistic pathogen.</title>
        <authorList>
            <person name="Stover C.K."/>
            <person name="Pham X.-Q.T."/>
            <person name="Erwin A.L."/>
            <person name="Mizoguchi S.D."/>
            <person name="Warrener P."/>
            <person name="Hickey M.J."/>
            <person name="Brinkman F.S.L."/>
            <person name="Hufnagle W.O."/>
            <person name="Kowalik D.J."/>
            <person name="Lagrou M."/>
            <person name="Garber R.L."/>
            <person name="Goltry L."/>
            <person name="Tolentino E."/>
            <person name="Westbrock-Wadman S."/>
            <person name="Yuan Y."/>
            <person name="Brody L.L."/>
            <person name="Coulter S.N."/>
            <person name="Folger K.R."/>
            <person name="Kas A."/>
            <person name="Larbig K."/>
            <person name="Lim R.M."/>
            <person name="Smith K.A."/>
            <person name="Spencer D.H."/>
            <person name="Wong G.K.-S."/>
            <person name="Wu Z."/>
            <person name="Paulsen I.T."/>
            <person name="Reizer J."/>
            <person name="Saier M.H. Jr."/>
            <person name="Hancock R.E.W."/>
            <person name="Lory S."/>
            <person name="Olson M.V."/>
        </authorList>
    </citation>
    <scope>NUCLEOTIDE SEQUENCE [LARGE SCALE GENOMIC DNA]</scope>
    <source>
        <strain>ATCC 15692 / DSM 22644 / CIP 104116 / JCM 14847 / LMG 12228 / 1C / PRS 101 / PAO1</strain>
    </source>
</reference>
<organism>
    <name type="scientific">Pseudomonas aeruginosa (strain ATCC 15692 / DSM 22644 / CIP 104116 / JCM 14847 / LMG 12228 / 1C / PRS 101 / PAO1)</name>
    <dbReference type="NCBI Taxonomy" id="208964"/>
    <lineage>
        <taxon>Bacteria</taxon>
        <taxon>Pseudomonadati</taxon>
        <taxon>Pseudomonadota</taxon>
        <taxon>Gammaproteobacteria</taxon>
        <taxon>Pseudomonadales</taxon>
        <taxon>Pseudomonadaceae</taxon>
        <taxon>Pseudomonas</taxon>
    </lineage>
</organism>
<evidence type="ECO:0000255" key="1">
    <source>
        <dbReference type="HAMAP-Rule" id="MF_00052"/>
    </source>
</evidence>
<evidence type="ECO:0000255" key="2">
    <source>
        <dbReference type="PROSITE-ProRule" id="PRU01319"/>
    </source>
</evidence>
<comment type="function">
    <text evidence="1">Endonuclease that specifically degrades the RNA of RNA-DNA hybrids.</text>
</comment>
<comment type="catalytic activity">
    <reaction evidence="1">
        <text>Endonucleolytic cleavage to 5'-phosphomonoester.</text>
        <dbReference type="EC" id="3.1.26.4"/>
    </reaction>
</comment>
<comment type="cofactor">
    <cofactor evidence="1">
        <name>Mn(2+)</name>
        <dbReference type="ChEBI" id="CHEBI:29035"/>
    </cofactor>
    <cofactor evidence="1">
        <name>Mg(2+)</name>
        <dbReference type="ChEBI" id="CHEBI:18420"/>
    </cofactor>
    <text evidence="1">Manganese or magnesium. Binds 1 divalent metal ion per monomer in the absence of substrate. May bind a second metal ion after substrate binding.</text>
</comment>
<comment type="subcellular location">
    <subcellularLocation>
        <location evidence="1">Cytoplasm</location>
    </subcellularLocation>
</comment>
<comment type="similarity">
    <text evidence="1">Belongs to the RNase HII family.</text>
</comment>
<name>RNH2_PSEAE</name>
<accession>Q9HXY9</accession>
<proteinExistence type="inferred from homology"/>
<keyword id="KW-0963">Cytoplasm</keyword>
<keyword id="KW-0255">Endonuclease</keyword>
<keyword id="KW-0378">Hydrolase</keyword>
<keyword id="KW-0464">Manganese</keyword>
<keyword id="KW-0479">Metal-binding</keyword>
<keyword id="KW-0540">Nuclease</keyword>
<keyword id="KW-1185">Reference proteome</keyword>
<gene>
    <name evidence="1" type="primary">rnhB</name>
    <name type="ordered locus">PA3642</name>
</gene>
<feature type="chain" id="PRO_0000111605" description="Ribonuclease HII">
    <location>
        <begin position="1"/>
        <end position="201"/>
    </location>
</feature>
<feature type="domain" description="RNase H type-2" evidence="2">
    <location>
        <begin position="12"/>
        <end position="201"/>
    </location>
</feature>
<feature type="binding site" evidence="1">
    <location>
        <position position="18"/>
    </location>
    <ligand>
        <name>a divalent metal cation</name>
        <dbReference type="ChEBI" id="CHEBI:60240"/>
    </ligand>
</feature>
<feature type="binding site" evidence="1">
    <location>
        <position position="19"/>
    </location>
    <ligand>
        <name>a divalent metal cation</name>
        <dbReference type="ChEBI" id="CHEBI:60240"/>
    </ligand>
</feature>
<feature type="binding site" evidence="1">
    <location>
        <position position="110"/>
    </location>
    <ligand>
        <name>a divalent metal cation</name>
        <dbReference type="ChEBI" id="CHEBI:60240"/>
    </ligand>
</feature>
<dbReference type="EC" id="3.1.26.4" evidence="1"/>
<dbReference type="EMBL" id="AE004091">
    <property type="protein sequence ID" value="AAG07030.1"/>
    <property type="molecule type" value="Genomic_DNA"/>
</dbReference>
<dbReference type="PIR" id="B83190">
    <property type="entry name" value="B83190"/>
</dbReference>
<dbReference type="RefSeq" id="NP_252332.1">
    <property type="nucleotide sequence ID" value="NC_002516.2"/>
</dbReference>
<dbReference type="RefSeq" id="WP_003113866.1">
    <property type="nucleotide sequence ID" value="NZ_QZGE01000001.1"/>
</dbReference>
<dbReference type="SMR" id="Q9HXY9"/>
<dbReference type="FunCoup" id="Q9HXY9">
    <property type="interactions" value="431"/>
</dbReference>
<dbReference type="STRING" id="208964.PA3642"/>
<dbReference type="PaxDb" id="208964-PA3642"/>
<dbReference type="DNASU" id="880498"/>
<dbReference type="GeneID" id="880498"/>
<dbReference type="KEGG" id="pae:PA3642"/>
<dbReference type="PATRIC" id="fig|208964.12.peg.3811"/>
<dbReference type="PseudoCAP" id="PA3642"/>
<dbReference type="HOGENOM" id="CLU_036532_3_2_6"/>
<dbReference type="InParanoid" id="Q9HXY9"/>
<dbReference type="OrthoDB" id="9803420at2"/>
<dbReference type="PhylomeDB" id="Q9HXY9"/>
<dbReference type="BioCyc" id="PAER208964:G1FZ6-3712-MONOMER"/>
<dbReference type="Proteomes" id="UP000002438">
    <property type="component" value="Chromosome"/>
</dbReference>
<dbReference type="GO" id="GO:0005737">
    <property type="term" value="C:cytoplasm"/>
    <property type="evidence" value="ECO:0007669"/>
    <property type="project" value="UniProtKB-SubCell"/>
</dbReference>
<dbReference type="GO" id="GO:0032299">
    <property type="term" value="C:ribonuclease H2 complex"/>
    <property type="evidence" value="ECO:0000318"/>
    <property type="project" value="GO_Central"/>
</dbReference>
<dbReference type="GO" id="GO:0030145">
    <property type="term" value="F:manganese ion binding"/>
    <property type="evidence" value="ECO:0007669"/>
    <property type="project" value="UniProtKB-UniRule"/>
</dbReference>
<dbReference type="GO" id="GO:0003723">
    <property type="term" value="F:RNA binding"/>
    <property type="evidence" value="ECO:0007669"/>
    <property type="project" value="InterPro"/>
</dbReference>
<dbReference type="GO" id="GO:0004523">
    <property type="term" value="F:RNA-DNA hybrid ribonuclease activity"/>
    <property type="evidence" value="ECO:0000318"/>
    <property type="project" value="GO_Central"/>
</dbReference>
<dbReference type="GO" id="GO:0043137">
    <property type="term" value="P:DNA replication, removal of RNA primer"/>
    <property type="evidence" value="ECO:0000318"/>
    <property type="project" value="GO_Central"/>
</dbReference>
<dbReference type="GO" id="GO:0006298">
    <property type="term" value="P:mismatch repair"/>
    <property type="evidence" value="ECO:0000318"/>
    <property type="project" value="GO_Central"/>
</dbReference>
<dbReference type="CDD" id="cd07182">
    <property type="entry name" value="RNase_HII_bacteria_HII_like"/>
    <property type="match status" value="1"/>
</dbReference>
<dbReference type="FunFam" id="3.30.420.10:FF:000006">
    <property type="entry name" value="Ribonuclease HII"/>
    <property type="match status" value="1"/>
</dbReference>
<dbReference type="Gene3D" id="3.30.420.10">
    <property type="entry name" value="Ribonuclease H-like superfamily/Ribonuclease H"/>
    <property type="match status" value="1"/>
</dbReference>
<dbReference type="HAMAP" id="MF_00052_B">
    <property type="entry name" value="RNase_HII_B"/>
    <property type="match status" value="1"/>
</dbReference>
<dbReference type="InterPro" id="IPR022898">
    <property type="entry name" value="RNase_HII"/>
</dbReference>
<dbReference type="InterPro" id="IPR001352">
    <property type="entry name" value="RNase_HII/HIII"/>
</dbReference>
<dbReference type="InterPro" id="IPR024567">
    <property type="entry name" value="RNase_HII/HIII_dom"/>
</dbReference>
<dbReference type="InterPro" id="IPR012337">
    <property type="entry name" value="RNaseH-like_sf"/>
</dbReference>
<dbReference type="InterPro" id="IPR036397">
    <property type="entry name" value="RNaseH_sf"/>
</dbReference>
<dbReference type="NCBIfam" id="NF000594">
    <property type="entry name" value="PRK00015.1-1"/>
    <property type="match status" value="1"/>
</dbReference>
<dbReference type="NCBIfam" id="NF000595">
    <property type="entry name" value="PRK00015.1-3"/>
    <property type="match status" value="1"/>
</dbReference>
<dbReference type="NCBIfam" id="NF000596">
    <property type="entry name" value="PRK00015.1-4"/>
    <property type="match status" value="1"/>
</dbReference>
<dbReference type="PANTHER" id="PTHR10954">
    <property type="entry name" value="RIBONUCLEASE H2 SUBUNIT A"/>
    <property type="match status" value="1"/>
</dbReference>
<dbReference type="PANTHER" id="PTHR10954:SF18">
    <property type="entry name" value="RIBONUCLEASE HII"/>
    <property type="match status" value="1"/>
</dbReference>
<dbReference type="Pfam" id="PF01351">
    <property type="entry name" value="RNase_HII"/>
    <property type="match status" value="1"/>
</dbReference>
<dbReference type="SUPFAM" id="SSF53098">
    <property type="entry name" value="Ribonuclease H-like"/>
    <property type="match status" value="1"/>
</dbReference>
<dbReference type="PROSITE" id="PS51975">
    <property type="entry name" value="RNASE_H_2"/>
    <property type="match status" value="1"/>
</dbReference>
<protein>
    <recommendedName>
        <fullName evidence="1">Ribonuclease HII</fullName>
        <shortName evidence="1">RNase HII</shortName>
        <ecNumber evidence="1">3.1.26.4</ecNumber>
    </recommendedName>
</protein>